<evidence type="ECO:0000255" key="1">
    <source>
        <dbReference type="HAMAP-Rule" id="MF_01522"/>
    </source>
</evidence>
<organism>
    <name type="scientific">Pectobacterium carotovorum subsp. carotovorum (strain PC1)</name>
    <dbReference type="NCBI Taxonomy" id="561230"/>
    <lineage>
        <taxon>Bacteria</taxon>
        <taxon>Pseudomonadati</taxon>
        <taxon>Pseudomonadota</taxon>
        <taxon>Gammaproteobacteria</taxon>
        <taxon>Enterobacterales</taxon>
        <taxon>Pectobacteriaceae</taxon>
        <taxon>Pectobacterium</taxon>
    </lineage>
</organism>
<name>KUP_PECCP</name>
<reference key="1">
    <citation type="submission" date="2009-07" db="EMBL/GenBank/DDBJ databases">
        <title>Complete sequence of Pectobacterium carotovorum subsp. carotovorum PC1.</title>
        <authorList>
            <consortium name="US DOE Joint Genome Institute"/>
            <person name="Lucas S."/>
            <person name="Copeland A."/>
            <person name="Lapidus A."/>
            <person name="Glavina del Rio T."/>
            <person name="Tice H."/>
            <person name="Bruce D."/>
            <person name="Goodwin L."/>
            <person name="Pitluck S."/>
            <person name="Munk A.C."/>
            <person name="Brettin T."/>
            <person name="Detter J.C."/>
            <person name="Han C."/>
            <person name="Tapia R."/>
            <person name="Larimer F."/>
            <person name="Land M."/>
            <person name="Hauser L."/>
            <person name="Kyrpides N."/>
            <person name="Mikhailova N."/>
            <person name="Balakrishnan V."/>
            <person name="Glasner J."/>
            <person name="Perna N.T."/>
        </authorList>
    </citation>
    <scope>NUCLEOTIDE SEQUENCE [LARGE SCALE GENOMIC DNA]</scope>
    <source>
        <strain>PC1</strain>
    </source>
</reference>
<accession>C6DJF7</accession>
<keyword id="KW-0997">Cell inner membrane</keyword>
<keyword id="KW-1003">Cell membrane</keyword>
<keyword id="KW-0406">Ion transport</keyword>
<keyword id="KW-0472">Membrane</keyword>
<keyword id="KW-0630">Potassium</keyword>
<keyword id="KW-0633">Potassium transport</keyword>
<keyword id="KW-0769">Symport</keyword>
<keyword id="KW-0812">Transmembrane</keyword>
<keyword id="KW-1133">Transmembrane helix</keyword>
<keyword id="KW-0813">Transport</keyword>
<comment type="function">
    <text evidence="1">Responsible for the low-affinity transport of potassium into the cell. Likely operates as a K(+):H(+) symporter.</text>
</comment>
<comment type="catalytic activity">
    <reaction evidence="1">
        <text>K(+)(in) + H(+)(in) = K(+)(out) + H(+)(out)</text>
        <dbReference type="Rhea" id="RHEA:28490"/>
        <dbReference type="ChEBI" id="CHEBI:15378"/>
        <dbReference type="ChEBI" id="CHEBI:29103"/>
    </reaction>
    <physiologicalReaction direction="right-to-left" evidence="1">
        <dbReference type="Rhea" id="RHEA:28492"/>
    </physiologicalReaction>
</comment>
<comment type="subcellular location">
    <subcellularLocation>
        <location evidence="1">Cell inner membrane</location>
        <topology evidence="1">Multi-pass membrane protein</topology>
    </subcellularLocation>
</comment>
<comment type="similarity">
    <text evidence="1">Belongs to the HAK/KUP transporter (TC 2.A.72) family.</text>
</comment>
<proteinExistence type="inferred from homology"/>
<gene>
    <name evidence="1" type="primary">kup</name>
    <name type="ordered locus">PC1_4242</name>
</gene>
<dbReference type="EMBL" id="CP001657">
    <property type="protein sequence ID" value="ACT15256.1"/>
    <property type="molecule type" value="Genomic_DNA"/>
</dbReference>
<dbReference type="RefSeq" id="WP_015842321.1">
    <property type="nucleotide sequence ID" value="NC_012917.1"/>
</dbReference>
<dbReference type="GeneID" id="67796230"/>
<dbReference type="KEGG" id="pct:PC1_4242"/>
<dbReference type="eggNOG" id="COG3158">
    <property type="taxonomic scope" value="Bacteria"/>
</dbReference>
<dbReference type="HOGENOM" id="CLU_008142_4_2_6"/>
<dbReference type="OrthoDB" id="9805577at2"/>
<dbReference type="Proteomes" id="UP000002736">
    <property type="component" value="Chromosome"/>
</dbReference>
<dbReference type="GO" id="GO:0005886">
    <property type="term" value="C:plasma membrane"/>
    <property type="evidence" value="ECO:0007669"/>
    <property type="project" value="UniProtKB-SubCell"/>
</dbReference>
<dbReference type="GO" id="GO:0015079">
    <property type="term" value="F:potassium ion transmembrane transporter activity"/>
    <property type="evidence" value="ECO:0007669"/>
    <property type="project" value="UniProtKB-UniRule"/>
</dbReference>
<dbReference type="GO" id="GO:0015293">
    <property type="term" value="F:symporter activity"/>
    <property type="evidence" value="ECO:0007669"/>
    <property type="project" value="UniProtKB-UniRule"/>
</dbReference>
<dbReference type="HAMAP" id="MF_01522">
    <property type="entry name" value="Kup"/>
    <property type="match status" value="1"/>
</dbReference>
<dbReference type="InterPro" id="IPR003855">
    <property type="entry name" value="K+_transporter"/>
</dbReference>
<dbReference type="InterPro" id="IPR053952">
    <property type="entry name" value="K_trans_C"/>
</dbReference>
<dbReference type="InterPro" id="IPR053951">
    <property type="entry name" value="K_trans_N"/>
</dbReference>
<dbReference type="InterPro" id="IPR023051">
    <property type="entry name" value="Kup"/>
</dbReference>
<dbReference type="NCBIfam" id="TIGR00794">
    <property type="entry name" value="kup"/>
    <property type="match status" value="1"/>
</dbReference>
<dbReference type="NCBIfam" id="NF008015">
    <property type="entry name" value="PRK10745.1"/>
    <property type="match status" value="1"/>
</dbReference>
<dbReference type="PANTHER" id="PTHR30540:SF79">
    <property type="entry name" value="LOW AFFINITY POTASSIUM TRANSPORT SYSTEM PROTEIN KUP"/>
    <property type="match status" value="1"/>
</dbReference>
<dbReference type="PANTHER" id="PTHR30540">
    <property type="entry name" value="OSMOTIC STRESS POTASSIUM TRANSPORTER"/>
    <property type="match status" value="1"/>
</dbReference>
<dbReference type="Pfam" id="PF02705">
    <property type="entry name" value="K_trans"/>
    <property type="match status" value="1"/>
</dbReference>
<dbReference type="Pfam" id="PF22776">
    <property type="entry name" value="K_trans_C"/>
    <property type="match status" value="1"/>
</dbReference>
<feature type="chain" id="PRO_1000215375" description="Low affinity potassium transport system protein Kup">
    <location>
        <begin position="1"/>
        <end position="622"/>
    </location>
</feature>
<feature type="transmembrane region" description="Helical" evidence="1">
    <location>
        <begin position="9"/>
        <end position="29"/>
    </location>
</feature>
<feature type="transmembrane region" description="Helical" evidence="1">
    <location>
        <begin position="49"/>
        <end position="69"/>
    </location>
</feature>
<feature type="transmembrane region" description="Helical" evidence="1">
    <location>
        <begin position="101"/>
        <end position="121"/>
    </location>
</feature>
<feature type="transmembrane region" description="Helical" evidence="1">
    <location>
        <begin position="137"/>
        <end position="157"/>
    </location>
</feature>
<feature type="transmembrane region" description="Helical" evidence="1">
    <location>
        <begin position="165"/>
        <end position="185"/>
    </location>
</feature>
<feature type="transmembrane region" description="Helical" evidence="1">
    <location>
        <begin position="212"/>
        <end position="232"/>
    </location>
</feature>
<feature type="transmembrane region" description="Helical" evidence="1">
    <location>
        <begin position="247"/>
        <end position="267"/>
    </location>
</feature>
<feature type="transmembrane region" description="Helical" evidence="1">
    <location>
        <begin position="279"/>
        <end position="299"/>
    </location>
</feature>
<feature type="transmembrane region" description="Helical" evidence="1">
    <location>
        <begin position="337"/>
        <end position="357"/>
    </location>
</feature>
<feature type="transmembrane region" description="Helical" evidence="1">
    <location>
        <begin position="363"/>
        <end position="383"/>
    </location>
</feature>
<feature type="transmembrane region" description="Helical" evidence="1">
    <location>
        <begin position="397"/>
        <end position="417"/>
    </location>
</feature>
<feature type="transmembrane region" description="Helical" evidence="1">
    <location>
        <begin position="419"/>
        <end position="439"/>
    </location>
</feature>
<sequence length="622" mass="69090">MSSEHKRSLPAVTLAAIGVVYGDIGTSPLYTLRECLSGQFGFGVEPDSVFGFLSLIFWLLVLVVSLKYLTYVMRADNAGEGGILTLMSLAGRNTSDRMTSVLVIMGLIGGSFFYGEVVITPAISVMSAMEGLEIAAPSMDSYIVPLSIVVLTLLFIIQKHGTGSVGKLFAPVMLIWFLTLGVLGARSIIANPEVLQALNPMYAVRFFIEYKAVSFFALGAVVLAITGVEALYADMGHFGKFPIRLAWFTVVLPSLVLNYFGQGALLLKNPEAIKNPFFLLAPDWALIPLMILATLATIIASQAVISGVFSLTRQAVRLGYLPPMRIVHTSDMESGQIYIPAINWMLYIAVVIVIVSFEHSSNLAAAYGIAVTGTMVITSILFCTVAVKNWLWNRYLAWVLLAGLLVIDVPMFLANVVKILSGGWLPLALGMVMFIIMTTWKSERFRLLRRLHEHGNSLDAMIASLEKSPPTRVPGTAVYFSRATRVIPFALLHNLKHNKILHERVVLLTMRTEDAPYVLNARRVTVEQLSPTFWRVIANYGWRETPDVEEVFQRCWQDGLTCQMMETSFFMSNESLIIGERPWYLRLRGKLFMMLSRNALRAADQFEIPPNRLIELGIQVEI</sequence>
<protein>
    <recommendedName>
        <fullName evidence="1">Low affinity potassium transport system protein Kup</fullName>
    </recommendedName>
    <alternativeName>
        <fullName evidence="1">Kup system potassium uptake protein</fullName>
    </alternativeName>
</protein>